<gene>
    <name evidence="9" type="primary">wtf28</name>
</gene>
<feature type="chain" id="PRO_0000452269" description="Meiotic driver wtf28">
    <location>
        <begin position="1"/>
        <end position="397"/>
    </location>
</feature>
<feature type="transmembrane region" description="Helical" evidence="3">
    <location>
        <begin position="108"/>
        <end position="128"/>
    </location>
</feature>
<feature type="transmembrane region" description="Helical" evidence="3">
    <location>
        <begin position="145"/>
        <end position="165"/>
    </location>
</feature>
<feature type="transmembrane region" description="Helical" evidence="3">
    <location>
        <begin position="175"/>
        <end position="195"/>
    </location>
</feature>
<feature type="transmembrane region" description="Helical" evidence="3">
    <location>
        <begin position="205"/>
        <end position="225"/>
    </location>
</feature>
<feature type="transmembrane region" description="Helical" evidence="3">
    <location>
        <begin position="230"/>
        <end position="250"/>
    </location>
</feature>
<feature type="transmembrane region" description="Helical" evidence="3">
    <location>
        <begin position="266"/>
        <end position="286"/>
    </location>
</feature>
<feature type="transmembrane region" description="Helical" evidence="3">
    <location>
        <begin position="290"/>
        <end position="310"/>
    </location>
</feature>
<feature type="transmembrane region" description="Helical" evidence="3">
    <location>
        <begin position="320"/>
        <end position="340"/>
    </location>
</feature>
<feature type="transmembrane region" description="Helical" evidence="3">
    <location>
        <begin position="357"/>
        <end position="377"/>
    </location>
</feature>
<feature type="region of interest" description="Disordered" evidence="4">
    <location>
        <begin position="1"/>
        <end position="41"/>
    </location>
</feature>
<feature type="region of interest" description="Disordered" evidence="4">
    <location>
        <begin position="65"/>
        <end position="102"/>
    </location>
</feature>
<feature type="compositionally biased region" description="Basic and acidic residues" evidence="4">
    <location>
        <begin position="11"/>
        <end position="29"/>
    </location>
</feature>
<feature type="splice variant" id="VSP_060937" description="In isoform 2." evidence="5">
    <location>
        <begin position="1"/>
        <end position="55"/>
    </location>
</feature>
<reference evidence="9" key="1">
    <citation type="journal article" date="2017" name="Elife">
        <title>wtf genes are prolific dual poison-antidote meiotic drivers.</title>
        <authorList>
            <person name="Nuckolls N.L."/>
            <person name="Bravo Nunez M.A."/>
            <person name="Eickbush M.T."/>
            <person name="Young J.M."/>
            <person name="Lange J.J."/>
            <person name="Yu J.S."/>
            <person name="Smith G.R."/>
            <person name="Jaspersen S.L."/>
            <person name="Malik H.S."/>
            <person name="Zanders S.E."/>
        </authorList>
    </citation>
    <scope>NUCLEOTIDE SEQUENCE [GENOMIC DNA]</scope>
    <scope>FUNCTION</scope>
    <scope>ALTERNATIVE INITIATION (ISOFORMS 1 AND 2)</scope>
    <scope>SUBCELLULAR LOCATION (ISOFORMS 1 AND 2)</scope>
</reference>
<reference evidence="8" key="2">
    <citation type="journal article" date="2020" name="Elife">
        <title>Atypical meiosis can be adaptive in outcrossed Schizosaccharomyces pombe due to wtf meiotic drivers.</title>
        <authorList>
            <person name="Bravo Nunez M.A."/>
            <person name="Sabbarini I.M."/>
            <person name="Eide L.E."/>
            <person name="Unckless R.L."/>
            <person name="Zanders S.E."/>
        </authorList>
    </citation>
    <scope>FUNCTION</scope>
    <scope>ALTERNATIVE INITIATION (ISOFORMS 1 AND 2)</scope>
</reference>
<accession>A0A218N035</accession>
<dbReference type="EMBL" id="KY652739">
    <property type="protein sequence ID" value="ASF62180.1"/>
    <property type="molecule type" value="Genomic_DNA"/>
</dbReference>
<dbReference type="GO" id="GO:0072324">
    <property type="term" value="C:ascus epiplasm"/>
    <property type="evidence" value="ECO:0000305"/>
    <property type="project" value="UniProtKB"/>
</dbReference>
<dbReference type="GO" id="GO:0005737">
    <property type="term" value="C:cytoplasm"/>
    <property type="evidence" value="ECO:0000305"/>
    <property type="project" value="UniProtKB"/>
</dbReference>
<dbReference type="GO" id="GO:0005789">
    <property type="term" value="C:endoplasmic reticulum membrane"/>
    <property type="evidence" value="ECO:0007669"/>
    <property type="project" value="UniProtKB-SubCell"/>
</dbReference>
<dbReference type="GO" id="GO:0005774">
    <property type="term" value="C:vacuolar membrane"/>
    <property type="evidence" value="ECO:0007669"/>
    <property type="project" value="UniProtKB-SubCell"/>
</dbReference>
<dbReference type="GO" id="GO:0110134">
    <property type="term" value="P:meiotic drive"/>
    <property type="evidence" value="ECO:0000314"/>
    <property type="project" value="UniProtKB"/>
</dbReference>
<dbReference type="InterPro" id="IPR004982">
    <property type="entry name" value="WTF"/>
</dbReference>
<dbReference type="Pfam" id="PF03303">
    <property type="entry name" value="WTF"/>
    <property type="match status" value="2"/>
</dbReference>
<protein>
    <recommendedName>
        <fullName evidence="7">Meiotic driver wtf28</fullName>
    </recommendedName>
</protein>
<evidence type="ECO:0000250" key="1">
    <source>
        <dbReference type="UniProtKB" id="A0A218N034"/>
    </source>
</evidence>
<evidence type="ECO:0000250" key="2">
    <source>
        <dbReference type="UniProtKB" id="O74420"/>
    </source>
</evidence>
<evidence type="ECO:0000255" key="3"/>
<evidence type="ECO:0000256" key="4">
    <source>
        <dbReference type="SAM" id="MobiDB-lite"/>
    </source>
</evidence>
<evidence type="ECO:0000269" key="5">
    <source>
    </source>
</evidence>
<evidence type="ECO:0000269" key="6">
    <source>
    </source>
</evidence>
<evidence type="ECO:0000303" key="7">
    <source>
    </source>
</evidence>
<evidence type="ECO:0000305" key="8"/>
<evidence type="ECO:0000312" key="9">
    <source>
        <dbReference type="EMBL" id="ASF62180.1"/>
    </source>
</evidence>
<organism evidence="9">
    <name type="scientific">Schizosaccharomyces kambucha</name>
    <name type="common">Fission yeast</name>
    <dbReference type="NCBI Taxonomy" id="204045"/>
    <lineage>
        <taxon>Eukaryota</taxon>
        <taxon>Fungi</taxon>
        <taxon>Dikarya</taxon>
        <taxon>Ascomycota</taxon>
        <taxon>Taphrinomycotina</taxon>
        <taxon>Schizosaccharomycetes</taxon>
        <taxon>Schizosaccharomycetales</taxon>
        <taxon>Schizosaccharomycetaceae</taxon>
        <taxon>Schizosaccharomyces</taxon>
    </lineage>
</organism>
<keyword id="KW-0024">Alternative initiation</keyword>
<keyword id="KW-0963">Cytoplasm</keyword>
<keyword id="KW-0256">Endoplasmic reticulum</keyword>
<keyword id="KW-0472">Membrane</keyword>
<keyword id="KW-0800">Toxin</keyword>
<keyword id="KW-0812">Transmembrane</keyword>
<keyword id="KW-1133">Transmembrane helix</keyword>
<keyword id="KW-0926">Vacuole</keyword>
<comment type="function">
    <text evidence="5 6">Promotes unequal transmission of alleles from the parental zygote to progeny spores by acting as poison/antidote system where the poison and antidote proteins are produced from the same locus; the poison component is trans-acting and targets all spores within an ascus whereas the antidote component is spore-specific, leading to poisoning of all progeny that do not inherit the allele.</text>
</comment>
<comment type="function">
    <molecule>Isoform 1</molecule>
    <text evidence="1">Localizes isoform 2 to the vacuole thereby facilitating its degradation.</text>
</comment>
<comment type="function">
    <molecule>Isoform 2</molecule>
    <text evidence="1">Forms toxic aggregates that disrupt spore maturation.</text>
</comment>
<comment type="subunit">
    <text evidence="1 2">Homomer (By similarity). Forms protein aggregates (By similarity). The two isoforms can interact with each other and with themselves (By similarity). High sequence similarity is required for their interaction (By similarity).</text>
</comment>
<comment type="subcellular location">
    <molecule>Isoform 1</molecule>
    <subcellularLocation>
        <location evidence="1 3">Spore membrane</location>
        <topology evidence="3">Multi-pass membrane protein</topology>
    </subcellularLocation>
    <subcellularLocation>
        <location evidence="1 3">Vacuole membrane</location>
        <topology evidence="3">Multi-pass membrane protein</topology>
    </subcellularLocation>
    <text evidence="1">Contained within spores expressing the isoform and localizes isoform 2 to the vacuole.</text>
</comment>
<comment type="subcellular location">
    <molecule>Isoform 2</molecule>
    <subcellularLocation>
        <location evidence="1">Ascus epiplasm</location>
    </subcellularLocation>
    <subcellularLocation>
        <location evidence="1">Cytoplasm</location>
    </subcellularLocation>
    <subcellularLocation>
        <location evidence="1 3">Spore membrane</location>
        <topology evidence="3">Multi-pass membrane protein</topology>
    </subcellularLocation>
    <subcellularLocation>
        <location evidence="1 3">Vacuole membrane</location>
        <topology evidence="3">Multi-pass membrane protein</topology>
    </subcellularLocation>
    <subcellularLocation>
        <location evidence="1 3">Endoplasmic reticulum membrane</location>
        <topology evidence="3">Multi-pass membrane protein</topology>
    </subcellularLocation>
    <text evidence="1">Localizes in trans to all spores within an ascus. Localization to the spore vacuole is dependent on isoform 1.</text>
</comment>
<comment type="alternative products">
    <event type="alternative initiation"/>
    <isoform>
        <id>A0A218N035-1</id>
        <name>1</name>
        <name evidence="7">Antidote</name>
        <name evidence="8">Suppressor</name>
        <sequence type="displayed"/>
    </isoform>
    <isoform>
        <id>A0A218N035-2</id>
        <name>2</name>
        <name evidence="7">Poison</name>
        <sequence type="described" ref="VSP_060937"/>
    </isoform>
</comment>
<comment type="similarity">
    <text evidence="8">Belongs to the WTF family.</text>
</comment>
<name>WTF28_SCHKA</name>
<proteinExistence type="inferred from homology"/>
<sequence length="397" mass="44495">MKNKYYPLRSSMDELSTKNDNEIDLEKGPLPEYNSEDGNTLPPYSENINLKDPKQMGQNITKLFNWNKSTTPPDYDENRLPITDEGNNPPNTHRENHSSGTADNSSPFLIKLIISFTPIFVLNVPAVCYLTYKDALFKDYGKDEWVYFGVWCAICLMSFISLWCFYETWTKAVKVTVIFLAQCVKVTVIFLAQCVKVTAIFSAQCIKVTVISLAKCVKVIAVGLYNSKKDLVVTIWLAWVVICFILFGCVKDGRLNLNKALICSTSSISAALFFILLLVCIPIWTLKHMLFGLFQVLGVQSCVVIVTKGLMYLFDKHIDATGYEIEASSLFVIGNFLFFYEMERPGALKRMPKFIRNGIASFLGGIANAFGGIANAIRGANDNNDIPLGEMEVESEV</sequence>